<dbReference type="EMBL" id="AL157959">
    <property type="protein sequence ID" value="CAM08302.1"/>
    <property type="molecule type" value="Genomic_DNA"/>
</dbReference>
<dbReference type="PIR" id="H81874">
    <property type="entry name" value="H81874"/>
</dbReference>
<dbReference type="RefSeq" id="WP_002246112.1">
    <property type="nucleotide sequence ID" value="NC_003116.1"/>
</dbReference>
<dbReference type="SMR" id="P57023"/>
<dbReference type="EnsemblBacteria" id="CAM08302">
    <property type="protein sequence ID" value="CAM08302"/>
    <property type="gene ID" value="NMA1091"/>
</dbReference>
<dbReference type="KEGG" id="nma:NMA1091"/>
<dbReference type="HOGENOM" id="CLU_092816_3_1_4"/>
<dbReference type="Proteomes" id="UP000000626">
    <property type="component" value="Chromosome"/>
</dbReference>
<dbReference type="GO" id="GO:0009279">
    <property type="term" value="C:cell outer membrane"/>
    <property type="evidence" value="ECO:0007669"/>
    <property type="project" value="UniProtKB-SubCell"/>
</dbReference>
<dbReference type="GO" id="GO:0044874">
    <property type="term" value="P:lipoprotein localization to outer membrane"/>
    <property type="evidence" value="ECO:0007669"/>
    <property type="project" value="UniProtKB-UniRule"/>
</dbReference>
<dbReference type="GO" id="GO:0015031">
    <property type="term" value="P:protein transport"/>
    <property type="evidence" value="ECO:0007669"/>
    <property type="project" value="UniProtKB-KW"/>
</dbReference>
<dbReference type="CDD" id="cd16326">
    <property type="entry name" value="LolB"/>
    <property type="match status" value="1"/>
</dbReference>
<dbReference type="Gene3D" id="2.50.20.10">
    <property type="entry name" value="Lipoprotein localisation LolA/LolB/LppX"/>
    <property type="match status" value="1"/>
</dbReference>
<dbReference type="HAMAP" id="MF_00233">
    <property type="entry name" value="LolB"/>
    <property type="match status" value="1"/>
</dbReference>
<dbReference type="InterPro" id="IPR029046">
    <property type="entry name" value="LolA/LolB/LppX"/>
</dbReference>
<dbReference type="InterPro" id="IPR004565">
    <property type="entry name" value="OM_lipoprot_LolB"/>
</dbReference>
<dbReference type="Pfam" id="PF03550">
    <property type="entry name" value="LolB"/>
    <property type="match status" value="1"/>
</dbReference>
<dbReference type="SUPFAM" id="SSF89392">
    <property type="entry name" value="Prokaryotic lipoproteins and lipoprotein localization factors"/>
    <property type="match status" value="1"/>
</dbReference>
<dbReference type="PROSITE" id="PS51257">
    <property type="entry name" value="PROKAR_LIPOPROTEIN"/>
    <property type="match status" value="1"/>
</dbReference>
<gene>
    <name type="primary">lolB</name>
    <name type="ordered locus">NMA1091</name>
</gene>
<keyword id="KW-0998">Cell outer membrane</keyword>
<keyword id="KW-0143">Chaperone</keyword>
<keyword id="KW-0449">Lipoprotein</keyword>
<keyword id="KW-0472">Membrane</keyword>
<keyword id="KW-0564">Palmitate</keyword>
<keyword id="KW-0653">Protein transport</keyword>
<keyword id="KW-0732">Signal</keyword>
<keyword id="KW-0813">Transport</keyword>
<organism>
    <name type="scientific">Neisseria meningitidis serogroup A / serotype 4A (strain DSM 15465 / Z2491)</name>
    <dbReference type="NCBI Taxonomy" id="122587"/>
    <lineage>
        <taxon>Bacteria</taxon>
        <taxon>Pseudomonadati</taxon>
        <taxon>Pseudomonadota</taxon>
        <taxon>Betaproteobacteria</taxon>
        <taxon>Neisseriales</taxon>
        <taxon>Neisseriaceae</taxon>
        <taxon>Neisseria</taxon>
    </lineage>
</organism>
<feature type="signal peptide" evidence="2">
    <location>
        <begin position="1"/>
        <end position="15"/>
    </location>
</feature>
<feature type="chain" id="PRO_0000018301" description="Outer-membrane lipoprotein LolB">
    <location>
        <begin position="16"/>
        <end position="193"/>
    </location>
</feature>
<feature type="lipid moiety-binding region" description="N-palmitoyl cysteine" evidence="2">
    <location>
        <position position="16"/>
    </location>
</feature>
<feature type="lipid moiety-binding region" description="S-diacylglycerol cysteine" evidence="2">
    <location>
        <position position="16"/>
    </location>
</feature>
<sequence length="193" mass="21156">MKHTVSASVILLLTACAQLPQNNENLWQPSEHTRSFTAEGRLAVKAEGKGSYANFDWTYQPPVETININTPLGSTLGQLCQDRDGALAVDGKGNVYQAESAEELSRQLVGFKLPIQYLHIWADGRPVAGAPYRILPDGILEQYGWTVGRTADSGGQVRTLQLNNGNLNIRLVFTEIGMPSETETQEQCAARIQ</sequence>
<evidence type="ECO:0000250" key="1"/>
<evidence type="ECO:0000255" key="2"/>
<evidence type="ECO:0000305" key="3"/>
<name>LOLB_NEIMA</name>
<proteinExistence type="inferred from homology"/>
<reference key="1">
    <citation type="journal article" date="2000" name="Nature">
        <title>Complete DNA sequence of a serogroup A strain of Neisseria meningitidis Z2491.</title>
        <authorList>
            <person name="Parkhill J."/>
            <person name="Achtman M."/>
            <person name="James K.D."/>
            <person name="Bentley S.D."/>
            <person name="Churcher C.M."/>
            <person name="Klee S.R."/>
            <person name="Morelli G."/>
            <person name="Basham D."/>
            <person name="Brown D."/>
            <person name="Chillingworth T."/>
            <person name="Davies R.M."/>
            <person name="Davis P."/>
            <person name="Devlin K."/>
            <person name="Feltwell T."/>
            <person name="Hamlin N."/>
            <person name="Holroyd S."/>
            <person name="Jagels K."/>
            <person name="Leather S."/>
            <person name="Moule S."/>
            <person name="Mungall K.L."/>
            <person name="Quail M.A."/>
            <person name="Rajandream M.A."/>
            <person name="Rutherford K.M."/>
            <person name="Simmonds M."/>
            <person name="Skelton J."/>
            <person name="Whitehead S."/>
            <person name="Spratt B.G."/>
            <person name="Barrell B.G."/>
        </authorList>
    </citation>
    <scope>NUCLEOTIDE SEQUENCE [LARGE SCALE GENOMIC DNA]</scope>
    <source>
        <strain>DSM 15465 / Z2491</strain>
    </source>
</reference>
<accession>P57023</accession>
<accession>A1IRB6</accession>
<protein>
    <recommendedName>
        <fullName>Outer-membrane lipoprotein LolB</fullName>
    </recommendedName>
</protein>
<comment type="function">
    <text evidence="1">Plays a critical role in the incorporation of lipoproteins in the outer membrane after they are released by the LolA protein.</text>
</comment>
<comment type="subunit">
    <text evidence="1">Monomer.</text>
</comment>
<comment type="subcellular location">
    <subcellularLocation>
        <location evidence="1">Cell outer membrane</location>
        <topology evidence="1">Lipid-anchor</topology>
    </subcellularLocation>
</comment>
<comment type="similarity">
    <text evidence="3">Belongs to the LolB family.</text>
</comment>